<gene>
    <name evidence="1" type="primary">rplK</name>
    <name type="ordered locus">Neut_1799</name>
</gene>
<organism>
    <name type="scientific">Nitrosomonas eutropha (strain DSM 101675 / C91 / Nm57)</name>
    <dbReference type="NCBI Taxonomy" id="335283"/>
    <lineage>
        <taxon>Bacteria</taxon>
        <taxon>Pseudomonadati</taxon>
        <taxon>Pseudomonadota</taxon>
        <taxon>Betaproteobacteria</taxon>
        <taxon>Nitrosomonadales</taxon>
        <taxon>Nitrosomonadaceae</taxon>
        <taxon>Nitrosomonas</taxon>
    </lineage>
</organism>
<comment type="function">
    <text evidence="1">Forms part of the ribosomal stalk which helps the ribosome interact with GTP-bound translation factors.</text>
</comment>
<comment type="subunit">
    <text evidence="1">Part of the ribosomal stalk of the 50S ribosomal subunit. Interacts with L10 and the large rRNA to form the base of the stalk. L10 forms an elongated spine to which L12 dimers bind in a sequential fashion forming a multimeric L10(L12)X complex.</text>
</comment>
<comment type="PTM">
    <text evidence="1">One or more lysine residues are methylated.</text>
</comment>
<comment type="similarity">
    <text evidence="1">Belongs to the universal ribosomal protein uL11 family.</text>
</comment>
<reference key="1">
    <citation type="journal article" date="2007" name="Environ. Microbiol.">
        <title>Whole-genome analysis of the ammonia-oxidizing bacterium, Nitrosomonas eutropha C91: implications for niche adaptation.</title>
        <authorList>
            <person name="Stein L.Y."/>
            <person name="Arp D.J."/>
            <person name="Berube P.M."/>
            <person name="Chain P.S."/>
            <person name="Hauser L."/>
            <person name="Jetten M.S."/>
            <person name="Klotz M.G."/>
            <person name="Larimer F.W."/>
            <person name="Norton J.M."/>
            <person name="Op den Camp H.J.M."/>
            <person name="Shin M."/>
            <person name="Wei X."/>
        </authorList>
    </citation>
    <scope>NUCLEOTIDE SEQUENCE [LARGE SCALE GENOMIC DNA]</scope>
    <source>
        <strain>DSM 101675 / C91 / Nm57</strain>
    </source>
</reference>
<proteinExistence type="inferred from homology"/>
<protein>
    <recommendedName>
        <fullName evidence="1">Large ribosomal subunit protein uL11</fullName>
    </recommendedName>
    <alternativeName>
        <fullName evidence="2">50S ribosomal protein L11</fullName>
    </alternativeName>
</protein>
<evidence type="ECO:0000255" key="1">
    <source>
        <dbReference type="HAMAP-Rule" id="MF_00736"/>
    </source>
</evidence>
<evidence type="ECO:0000305" key="2"/>
<accession>Q0AF49</accession>
<feature type="chain" id="PRO_1000046228" description="Large ribosomal subunit protein uL11">
    <location>
        <begin position="1"/>
        <end position="143"/>
    </location>
</feature>
<keyword id="KW-0488">Methylation</keyword>
<keyword id="KW-0687">Ribonucleoprotein</keyword>
<keyword id="KW-0689">Ribosomal protein</keyword>
<keyword id="KW-0694">RNA-binding</keyword>
<keyword id="KW-0699">rRNA-binding</keyword>
<sequence>MAKKIIGYIKLQIPAGKANPSPPVGPALGQRQLNIMEFCKAFNAATQKMEPGLPVPVVITAYADKSFTFVLKTTPASVLIKKLAGLSKGSAQPHVDKVGKLTRSQVEEIAKIKMEDLTAADMDAAIRTIAGSARSMGVEVEGV</sequence>
<dbReference type="EMBL" id="CP000450">
    <property type="protein sequence ID" value="ABI60033.1"/>
    <property type="molecule type" value="Genomic_DNA"/>
</dbReference>
<dbReference type="RefSeq" id="WP_011634839.1">
    <property type="nucleotide sequence ID" value="NC_008344.1"/>
</dbReference>
<dbReference type="SMR" id="Q0AF49"/>
<dbReference type="STRING" id="335283.Neut_1799"/>
<dbReference type="KEGG" id="net:Neut_1799"/>
<dbReference type="eggNOG" id="COG0080">
    <property type="taxonomic scope" value="Bacteria"/>
</dbReference>
<dbReference type="HOGENOM" id="CLU_074237_2_0_4"/>
<dbReference type="OrthoDB" id="9802408at2"/>
<dbReference type="Proteomes" id="UP000001966">
    <property type="component" value="Chromosome"/>
</dbReference>
<dbReference type="GO" id="GO:0022625">
    <property type="term" value="C:cytosolic large ribosomal subunit"/>
    <property type="evidence" value="ECO:0007669"/>
    <property type="project" value="TreeGrafter"/>
</dbReference>
<dbReference type="GO" id="GO:0070180">
    <property type="term" value="F:large ribosomal subunit rRNA binding"/>
    <property type="evidence" value="ECO:0007669"/>
    <property type="project" value="UniProtKB-UniRule"/>
</dbReference>
<dbReference type="GO" id="GO:0003735">
    <property type="term" value="F:structural constituent of ribosome"/>
    <property type="evidence" value="ECO:0007669"/>
    <property type="project" value="InterPro"/>
</dbReference>
<dbReference type="GO" id="GO:0006412">
    <property type="term" value="P:translation"/>
    <property type="evidence" value="ECO:0007669"/>
    <property type="project" value="UniProtKB-UniRule"/>
</dbReference>
<dbReference type="CDD" id="cd00349">
    <property type="entry name" value="Ribosomal_L11"/>
    <property type="match status" value="1"/>
</dbReference>
<dbReference type="FunFam" id="1.10.10.250:FF:000001">
    <property type="entry name" value="50S ribosomal protein L11"/>
    <property type="match status" value="1"/>
</dbReference>
<dbReference type="FunFam" id="3.30.1550.10:FF:000001">
    <property type="entry name" value="50S ribosomal protein L11"/>
    <property type="match status" value="1"/>
</dbReference>
<dbReference type="Gene3D" id="1.10.10.250">
    <property type="entry name" value="Ribosomal protein L11, C-terminal domain"/>
    <property type="match status" value="1"/>
</dbReference>
<dbReference type="Gene3D" id="3.30.1550.10">
    <property type="entry name" value="Ribosomal protein L11/L12, N-terminal domain"/>
    <property type="match status" value="1"/>
</dbReference>
<dbReference type="HAMAP" id="MF_00736">
    <property type="entry name" value="Ribosomal_uL11"/>
    <property type="match status" value="1"/>
</dbReference>
<dbReference type="InterPro" id="IPR000911">
    <property type="entry name" value="Ribosomal_uL11"/>
</dbReference>
<dbReference type="InterPro" id="IPR006519">
    <property type="entry name" value="Ribosomal_uL11_bac-typ"/>
</dbReference>
<dbReference type="InterPro" id="IPR020783">
    <property type="entry name" value="Ribosomal_uL11_C"/>
</dbReference>
<dbReference type="InterPro" id="IPR036769">
    <property type="entry name" value="Ribosomal_uL11_C_sf"/>
</dbReference>
<dbReference type="InterPro" id="IPR020785">
    <property type="entry name" value="Ribosomal_uL11_CS"/>
</dbReference>
<dbReference type="InterPro" id="IPR020784">
    <property type="entry name" value="Ribosomal_uL11_N"/>
</dbReference>
<dbReference type="InterPro" id="IPR036796">
    <property type="entry name" value="Ribosomal_uL11_N_sf"/>
</dbReference>
<dbReference type="NCBIfam" id="TIGR01632">
    <property type="entry name" value="L11_bact"/>
    <property type="match status" value="1"/>
</dbReference>
<dbReference type="PANTHER" id="PTHR11661">
    <property type="entry name" value="60S RIBOSOMAL PROTEIN L12"/>
    <property type="match status" value="1"/>
</dbReference>
<dbReference type="PANTHER" id="PTHR11661:SF1">
    <property type="entry name" value="LARGE RIBOSOMAL SUBUNIT PROTEIN UL11M"/>
    <property type="match status" value="1"/>
</dbReference>
<dbReference type="Pfam" id="PF00298">
    <property type="entry name" value="Ribosomal_L11"/>
    <property type="match status" value="1"/>
</dbReference>
<dbReference type="Pfam" id="PF03946">
    <property type="entry name" value="Ribosomal_L11_N"/>
    <property type="match status" value="1"/>
</dbReference>
<dbReference type="SMART" id="SM00649">
    <property type="entry name" value="RL11"/>
    <property type="match status" value="1"/>
</dbReference>
<dbReference type="SUPFAM" id="SSF54747">
    <property type="entry name" value="Ribosomal L11/L12e N-terminal domain"/>
    <property type="match status" value="1"/>
</dbReference>
<dbReference type="SUPFAM" id="SSF46906">
    <property type="entry name" value="Ribosomal protein L11, C-terminal domain"/>
    <property type="match status" value="1"/>
</dbReference>
<dbReference type="PROSITE" id="PS00359">
    <property type="entry name" value="RIBOSOMAL_L11"/>
    <property type="match status" value="1"/>
</dbReference>
<name>RL11_NITEC</name>